<dbReference type="EMBL" id="U00089">
    <property type="protein sequence ID" value="AAB96221.1"/>
    <property type="molecule type" value="Genomic_DNA"/>
</dbReference>
<dbReference type="PIR" id="S73899">
    <property type="entry name" value="S73899"/>
</dbReference>
<dbReference type="RefSeq" id="NP_109948.1">
    <property type="nucleotide sequence ID" value="NC_000912.1"/>
</dbReference>
<dbReference type="RefSeq" id="WP_010874617.1">
    <property type="nucleotide sequence ID" value="NZ_OU342337.1"/>
</dbReference>
<dbReference type="STRING" id="272634.MPN_260"/>
<dbReference type="EnsemblBacteria" id="AAB96221">
    <property type="protein sequence ID" value="AAB96221"/>
    <property type="gene ID" value="MPN_260"/>
</dbReference>
<dbReference type="KEGG" id="mpn:MPN_260"/>
<dbReference type="PATRIC" id="fig|272634.6.peg.279"/>
<dbReference type="HOGENOM" id="CLU_040769_1_2_14"/>
<dbReference type="OrthoDB" id="9792579at2"/>
<dbReference type="BioCyc" id="MPNE272634:G1GJ3-409-MONOMER"/>
<dbReference type="Proteomes" id="UP000000808">
    <property type="component" value="Chromosome"/>
</dbReference>
<dbReference type="GO" id="GO:0005886">
    <property type="term" value="C:plasma membrane"/>
    <property type="evidence" value="ECO:0007669"/>
    <property type="project" value="UniProtKB-SubCell"/>
</dbReference>
<dbReference type="GO" id="GO:0022857">
    <property type="term" value="F:transmembrane transporter activity"/>
    <property type="evidence" value="ECO:0007669"/>
    <property type="project" value="InterPro"/>
</dbReference>
<dbReference type="CDD" id="cd06580">
    <property type="entry name" value="TM_PBP1_transp_TpRbsC_like"/>
    <property type="match status" value="1"/>
</dbReference>
<dbReference type="InterPro" id="IPR001851">
    <property type="entry name" value="ABC_transp_permease"/>
</dbReference>
<dbReference type="PANTHER" id="PTHR43370:SF1">
    <property type="entry name" value="GUANOSINE ABC TRANSPORTER PERMEASE PROTEIN NUPQ"/>
    <property type="match status" value="1"/>
</dbReference>
<dbReference type="PANTHER" id="PTHR43370">
    <property type="entry name" value="SUGAR ABC TRANSPORTER INTEGRAL MEMBRANE PROTEIN-RELATED"/>
    <property type="match status" value="1"/>
</dbReference>
<dbReference type="Pfam" id="PF02653">
    <property type="entry name" value="BPD_transp_2"/>
    <property type="match status" value="1"/>
</dbReference>
<name>Y260_MYCPN</name>
<evidence type="ECO:0000255" key="1"/>
<evidence type="ECO:0000305" key="2"/>
<protein>
    <recommendedName>
        <fullName>Uncharacterized protein MG121 homolog</fullName>
    </recommendedName>
</protein>
<feature type="chain" id="PRO_0000210426" description="Uncharacterized protein MG121 homolog">
    <location>
        <begin position="1"/>
        <end position="311"/>
    </location>
</feature>
<feature type="transmembrane region" description="Helical" evidence="1">
    <location>
        <begin position="11"/>
        <end position="31"/>
    </location>
</feature>
<feature type="transmembrane region" description="Helical" evidence="1">
    <location>
        <begin position="34"/>
        <end position="54"/>
    </location>
</feature>
<feature type="transmembrane region" description="Helical" evidence="1">
    <location>
        <begin position="72"/>
        <end position="92"/>
    </location>
</feature>
<feature type="transmembrane region" description="Helical" evidence="1">
    <location>
        <begin position="101"/>
        <end position="121"/>
    </location>
</feature>
<feature type="transmembrane region" description="Helical" evidence="1">
    <location>
        <begin position="147"/>
        <end position="167"/>
    </location>
</feature>
<feature type="transmembrane region" description="Helical" evidence="1">
    <location>
        <begin position="198"/>
        <end position="218"/>
    </location>
</feature>
<feature type="transmembrane region" description="Helical" evidence="1">
    <location>
        <begin position="233"/>
        <end position="253"/>
    </location>
</feature>
<feature type="transmembrane region" description="Helical" evidence="1">
    <location>
        <begin position="257"/>
        <end position="277"/>
    </location>
</feature>
<feature type="transmembrane region" description="Helical" evidence="1">
    <location>
        <begin position="279"/>
        <end position="299"/>
    </location>
</feature>
<comment type="subcellular location">
    <subcellularLocation>
        <location evidence="2">Cell membrane</location>
        <topology evidence="2">Multi-pass membrane protein</topology>
    </subcellularLocation>
</comment>
<sequence>MSQSLISFSNLDNWLFVAPALLLAVLSGYLSERVGIVNIAINGGMVFGGMFLSLMSYAFVPNANDSAPSWSLAISIPLSVIFASAVGFLFGIAAIKLKADHVIVGTGVNLLGTGINFFVAQNARSLLNDTDLRVRYSFVRTGNSVSIEGIAIFAFAIIFVLLVWYLMNFTKTGLRYRAVGENPNVIDTQGISVYKYQWFGVMASTMVAALAGCCFALSPQVPSFSSGDVSGFGFIAIAIMIISMWRIIPSIVISPLFALAYVLTTGVVGNANNTYLLRTIPFIISLLVMMVFGYLNVGPKNVGKHFDKGLR</sequence>
<proteinExistence type="predicted"/>
<keyword id="KW-1003">Cell membrane</keyword>
<keyword id="KW-0472">Membrane</keyword>
<keyword id="KW-1185">Reference proteome</keyword>
<keyword id="KW-0812">Transmembrane</keyword>
<keyword id="KW-1133">Transmembrane helix</keyword>
<organism>
    <name type="scientific">Mycoplasma pneumoniae (strain ATCC 29342 / M129 / Subtype 1)</name>
    <name type="common">Mycoplasmoides pneumoniae</name>
    <dbReference type="NCBI Taxonomy" id="272634"/>
    <lineage>
        <taxon>Bacteria</taxon>
        <taxon>Bacillati</taxon>
        <taxon>Mycoplasmatota</taxon>
        <taxon>Mycoplasmoidales</taxon>
        <taxon>Mycoplasmoidaceae</taxon>
        <taxon>Mycoplasmoides</taxon>
    </lineage>
</organism>
<reference key="1">
    <citation type="journal article" date="1996" name="Nucleic Acids Res.">
        <title>Complete sequence analysis of the genome of the bacterium Mycoplasma pneumoniae.</title>
        <authorList>
            <person name="Himmelreich R."/>
            <person name="Hilbert H."/>
            <person name="Plagens H."/>
            <person name="Pirkl E."/>
            <person name="Li B.-C."/>
            <person name="Herrmann R."/>
        </authorList>
    </citation>
    <scope>NUCLEOTIDE SEQUENCE [LARGE SCALE GENOMIC DNA]</scope>
    <source>
        <strain>ATCC 29342 / M129 / Subtype 1</strain>
    </source>
</reference>
<gene>
    <name type="ordered locus">MPN_260</name>
    <name type="ORF">A65_orf311</name>
    <name type="ORF">MP573</name>
</gene>
<accession>P75514</accession>